<protein>
    <recommendedName>
        <fullName evidence="1">ATP-dependent Clp protease adapter protein ClpS</fullName>
    </recommendedName>
</protein>
<keyword id="KW-1185">Reference proteome</keyword>
<sequence>MGKTNDWLDFDQLAEEKVRDALKPPSMYKVILVNDDYTPMEFVIDVLQKFFSYDVERATQLMLAVHYQGKAICGVFTAEVAETKVAMVNKYARENEHPLLCTLEKA</sequence>
<accession>B2TUJ7</accession>
<proteinExistence type="inferred from homology"/>
<gene>
    <name evidence="1" type="primary">clpS</name>
    <name type="ordered locus">SbBS512_E2448</name>
</gene>
<name>CLPS_SHIB3</name>
<dbReference type="EMBL" id="CP001063">
    <property type="protein sequence ID" value="ACD08320.1"/>
    <property type="molecule type" value="Genomic_DNA"/>
</dbReference>
<dbReference type="RefSeq" id="WP_000520781.1">
    <property type="nucleotide sequence ID" value="NC_010658.1"/>
</dbReference>
<dbReference type="SMR" id="B2TUJ7"/>
<dbReference type="STRING" id="344609.SbBS512_E2448"/>
<dbReference type="GeneID" id="86863397"/>
<dbReference type="KEGG" id="sbc:SbBS512_E2448"/>
<dbReference type="HOGENOM" id="CLU_134358_2_1_6"/>
<dbReference type="Proteomes" id="UP000001030">
    <property type="component" value="Chromosome"/>
</dbReference>
<dbReference type="GO" id="GO:0030163">
    <property type="term" value="P:protein catabolic process"/>
    <property type="evidence" value="ECO:0007669"/>
    <property type="project" value="InterPro"/>
</dbReference>
<dbReference type="GO" id="GO:0006508">
    <property type="term" value="P:proteolysis"/>
    <property type="evidence" value="ECO:0007669"/>
    <property type="project" value="UniProtKB-UniRule"/>
</dbReference>
<dbReference type="FunFam" id="3.30.1390.10:FF:000002">
    <property type="entry name" value="ATP-dependent Clp protease adapter protein ClpS"/>
    <property type="match status" value="1"/>
</dbReference>
<dbReference type="Gene3D" id="3.30.1390.10">
    <property type="match status" value="1"/>
</dbReference>
<dbReference type="HAMAP" id="MF_00302">
    <property type="entry name" value="ClpS"/>
    <property type="match status" value="1"/>
</dbReference>
<dbReference type="InterPro" id="IPR022935">
    <property type="entry name" value="ClpS"/>
</dbReference>
<dbReference type="InterPro" id="IPR003769">
    <property type="entry name" value="ClpS_core"/>
</dbReference>
<dbReference type="InterPro" id="IPR014719">
    <property type="entry name" value="Ribosomal_bL12_C/ClpS-like"/>
</dbReference>
<dbReference type="NCBIfam" id="NF000670">
    <property type="entry name" value="PRK00033.1-3"/>
    <property type="match status" value="1"/>
</dbReference>
<dbReference type="NCBIfam" id="NF000672">
    <property type="entry name" value="PRK00033.1-5"/>
    <property type="match status" value="1"/>
</dbReference>
<dbReference type="PANTHER" id="PTHR33473:SF19">
    <property type="entry name" value="ATP-DEPENDENT CLP PROTEASE ADAPTER PROTEIN CLPS"/>
    <property type="match status" value="1"/>
</dbReference>
<dbReference type="PANTHER" id="PTHR33473">
    <property type="entry name" value="ATP-DEPENDENT CLP PROTEASE ADAPTER PROTEIN CLPS1, CHLOROPLASTIC"/>
    <property type="match status" value="1"/>
</dbReference>
<dbReference type="Pfam" id="PF02617">
    <property type="entry name" value="ClpS"/>
    <property type="match status" value="1"/>
</dbReference>
<dbReference type="SUPFAM" id="SSF54736">
    <property type="entry name" value="ClpS-like"/>
    <property type="match status" value="1"/>
</dbReference>
<comment type="function">
    <text evidence="1">Involved in the modulation of the specificity of the ClpAP-mediated ATP-dependent protein degradation.</text>
</comment>
<comment type="subunit">
    <text evidence="1">Binds to the N-terminal domain of the chaperone ClpA.</text>
</comment>
<comment type="similarity">
    <text evidence="1">Belongs to the ClpS family.</text>
</comment>
<reference key="1">
    <citation type="submission" date="2008-05" db="EMBL/GenBank/DDBJ databases">
        <title>Complete sequence of Shigella boydii serotype 18 strain BS512.</title>
        <authorList>
            <person name="Rasko D.A."/>
            <person name="Rosovitz M."/>
            <person name="Maurelli A.T."/>
            <person name="Myers G."/>
            <person name="Seshadri R."/>
            <person name="Cer R."/>
            <person name="Jiang L."/>
            <person name="Ravel J."/>
            <person name="Sebastian Y."/>
        </authorList>
    </citation>
    <scope>NUCLEOTIDE SEQUENCE [LARGE SCALE GENOMIC DNA]</scope>
    <source>
        <strain>CDC 3083-94 / BS512</strain>
    </source>
</reference>
<evidence type="ECO:0000255" key="1">
    <source>
        <dbReference type="HAMAP-Rule" id="MF_00302"/>
    </source>
</evidence>
<organism>
    <name type="scientific">Shigella boydii serotype 18 (strain CDC 3083-94 / BS512)</name>
    <dbReference type="NCBI Taxonomy" id="344609"/>
    <lineage>
        <taxon>Bacteria</taxon>
        <taxon>Pseudomonadati</taxon>
        <taxon>Pseudomonadota</taxon>
        <taxon>Gammaproteobacteria</taxon>
        <taxon>Enterobacterales</taxon>
        <taxon>Enterobacteriaceae</taxon>
        <taxon>Shigella</taxon>
    </lineage>
</organism>
<feature type="chain" id="PRO_1000115478" description="ATP-dependent Clp protease adapter protein ClpS">
    <location>
        <begin position="1"/>
        <end position="106"/>
    </location>
</feature>